<comment type="function">
    <text evidence="1">Catalyzes the synthesis of GMP from XMP.</text>
</comment>
<comment type="catalytic activity">
    <reaction evidence="1">
        <text>XMP + L-glutamine + ATP + H2O = GMP + L-glutamate + AMP + diphosphate + 2 H(+)</text>
        <dbReference type="Rhea" id="RHEA:11680"/>
        <dbReference type="ChEBI" id="CHEBI:15377"/>
        <dbReference type="ChEBI" id="CHEBI:15378"/>
        <dbReference type="ChEBI" id="CHEBI:29985"/>
        <dbReference type="ChEBI" id="CHEBI:30616"/>
        <dbReference type="ChEBI" id="CHEBI:33019"/>
        <dbReference type="ChEBI" id="CHEBI:57464"/>
        <dbReference type="ChEBI" id="CHEBI:58115"/>
        <dbReference type="ChEBI" id="CHEBI:58359"/>
        <dbReference type="ChEBI" id="CHEBI:456215"/>
        <dbReference type="EC" id="6.3.5.2"/>
    </reaction>
</comment>
<comment type="pathway">
    <text evidence="1">Purine metabolism; GMP biosynthesis; GMP from XMP (L-Gln route): step 1/1.</text>
</comment>
<comment type="subunit">
    <text evidence="1">Homodimer.</text>
</comment>
<proteinExistence type="inferred from homology"/>
<reference key="1">
    <citation type="journal article" date="2008" name="J. Bacteriol.">
        <title>Complete genome sequence of uropathogenic Proteus mirabilis, a master of both adherence and motility.</title>
        <authorList>
            <person name="Pearson M.M."/>
            <person name="Sebaihia M."/>
            <person name="Churcher C."/>
            <person name="Quail M.A."/>
            <person name="Seshasayee A.S."/>
            <person name="Luscombe N.M."/>
            <person name="Abdellah Z."/>
            <person name="Arrosmith C."/>
            <person name="Atkin B."/>
            <person name="Chillingworth T."/>
            <person name="Hauser H."/>
            <person name="Jagels K."/>
            <person name="Moule S."/>
            <person name="Mungall K."/>
            <person name="Norbertczak H."/>
            <person name="Rabbinowitsch E."/>
            <person name="Walker D."/>
            <person name="Whithead S."/>
            <person name="Thomson N.R."/>
            <person name="Rather P.N."/>
            <person name="Parkhill J."/>
            <person name="Mobley H.L.T."/>
        </authorList>
    </citation>
    <scope>NUCLEOTIDE SEQUENCE [LARGE SCALE GENOMIC DNA]</scope>
    <source>
        <strain>HI4320</strain>
    </source>
</reference>
<gene>
    <name evidence="1" type="primary">guaA</name>
    <name type="ordered locus">PMI1545</name>
</gene>
<keyword id="KW-0067">ATP-binding</keyword>
<keyword id="KW-0315">Glutamine amidotransferase</keyword>
<keyword id="KW-0332">GMP biosynthesis</keyword>
<keyword id="KW-0436">Ligase</keyword>
<keyword id="KW-0547">Nucleotide-binding</keyword>
<keyword id="KW-0658">Purine biosynthesis</keyword>
<keyword id="KW-1185">Reference proteome</keyword>
<sequence length="525" mass="58816">MTANIHNHRILILDFGSQYTQLIARRIREIGVYCELWAWDVTEEQIREFNPNGIILSGGPESTTEDNSPRAPEYVFNAGVPVLGICYGMQTMSMQLGGDVEVSGEREFGYSQVEIRETCELFRDIQDSVSEDGKPLLDVWMSHGDKVTAIPADFVTIASTETCPFAIMANEEKRFYGVQFHPEVTHTHQGLAILKRFVLDICGCDALWTSAAIIEDTVARLKQQIGDDHVILALSGGVDSSVTALLLNRAIGKRLTCVFVDNGLLRLNEAEQVMAMFKGKFDLNIIHVEAEDRFLTALKGENDPEKKRKIIGHTFIEIFDEEAVKLPQVKWLAQGTIYPDVIESAASATGKAHVIKSHHNVGGLPEDMKLGLVEPLKELFKDEVRKIGLELGLPYDMLYRHPFPGPGLGVRVLGEIKKEYCDLLRRADAIFIEELHKADLYNKVSQAFTVFLPVRSVGVMGDGRKYDWVVSLRAVETVDFMTAHWAHLPYDFLGRVSNRIINEVNGISRVVYDISGKPPATIEWE</sequence>
<name>GUAA_PROMH</name>
<dbReference type="EC" id="6.3.5.2" evidence="1"/>
<dbReference type="EMBL" id="AM942759">
    <property type="protein sequence ID" value="CAR43237.1"/>
    <property type="molecule type" value="Genomic_DNA"/>
</dbReference>
<dbReference type="RefSeq" id="WP_004250844.1">
    <property type="nucleotide sequence ID" value="NC_010554.1"/>
</dbReference>
<dbReference type="SMR" id="B4EY59"/>
<dbReference type="EnsemblBacteria" id="CAR43237">
    <property type="protein sequence ID" value="CAR43237"/>
    <property type="gene ID" value="PMI1545"/>
</dbReference>
<dbReference type="GeneID" id="6801463"/>
<dbReference type="KEGG" id="pmr:PMI1545"/>
<dbReference type="eggNOG" id="COG0518">
    <property type="taxonomic scope" value="Bacteria"/>
</dbReference>
<dbReference type="eggNOG" id="COG0519">
    <property type="taxonomic scope" value="Bacteria"/>
</dbReference>
<dbReference type="HOGENOM" id="CLU_014340_0_5_6"/>
<dbReference type="UniPathway" id="UPA00189">
    <property type="reaction ID" value="UER00296"/>
</dbReference>
<dbReference type="Proteomes" id="UP000008319">
    <property type="component" value="Chromosome"/>
</dbReference>
<dbReference type="GO" id="GO:0005829">
    <property type="term" value="C:cytosol"/>
    <property type="evidence" value="ECO:0007669"/>
    <property type="project" value="TreeGrafter"/>
</dbReference>
<dbReference type="GO" id="GO:0005524">
    <property type="term" value="F:ATP binding"/>
    <property type="evidence" value="ECO:0007669"/>
    <property type="project" value="UniProtKB-UniRule"/>
</dbReference>
<dbReference type="GO" id="GO:0003921">
    <property type="term" value="F:GMP synthase activity"/>
    <property type="evidence" value="ECO:0007669"/>
    <property type="project" value="InterPro"/>
</dbReference>
<dbReference type="CDD" id="cd01742">
    <property type="entry name" value="GATase1_GMP_Synthase"/>
    <property type="match status" value="1"/>
</dbReference>
<dbReference type="CDD" id="cd01997">
    <property type="entry name" value="GMP_synthase_C"/>
    <property type="match status" value="1"/>
</dbReference>
<dbReference type="FunFam" id="3.30.300.10:FF:000002">
    <property type="entry name" value="GMP synthase [glutamine-hydrolyzing]"/>
    <property type="match status" value="1"/>
</dbReference>
<dbReference type="FunFam" id="3.40.50.620:FF:000001">
    <property type="entry name" value="GMP synthase [glutamine-hydrolyzing]"/>
    <property type="match status" value="1"/>
</dbReference>
<dbReference type="FunFam" id="3.40.50.880:FF:000001">
    <property type="entry name" value="GMP synthase [glutamine-hydrolyzing]"/>
    <property type="match status" value="1"/>
</dbReference>
<dbReference type="Gene3D" id="3.30.300.10">
    <property type="match status" value="1"/>
</dbReference>
<dbReference type="Gene3D" id="3.40.50.880">
    <property type="match status" value="1"/>
</dbReference>
<dbReference type="Gene3D" id="3.40.50.620">
    <property type="entry name" value="HUPs"/>
    <property type="match status" value="1"/>
</dbReference>
<dbReference type="HAMAP" id="MF_00344">
    <property type="entry name" value="GMP_synthase"/>
    <property type="match status" value="1"/>
</dbReference>
<dbReference type="InterPro" id="IPR029062">
    <property type="entry name" value="Class_I_gatase-like"/>
</dbReference>
<dbReference type="InterPro" id="IPR017926">
    <property type="entry name" value="GATASE"/>
</dbReference>
<dbReference type="InterPro" id="IPR001674">
    <property type="entry name" value="GMP_synth_C"/>
</dbReference>
<dbReference type="InterPro" id="IPR004739">
    <property type="entry name" value="GMP_synth_GATase"/>
</dbReference>
<dbReference type="InterPro" id="IPR022955">
    <property type="entry name" value="GMP_synthase"/>
</dbReference>
<dbReference type="InterPro" id="IPR025777">
    <property type="entry name" value="GMPS_ATP_PPase_dom"/>
</dbReference>
<dbReference type="InterPro" id="IPR022310">
    <property type="entry name" value="NAD/GMP_synthase"/>
</dbReference>
<dbReference type="InterPro" id="IPR014729">
    <property type="entry name" value="Rossmann-like_a/b/a_fold"/>
</dbReference>
<dbReference type="NCBIfam" id="TIGR00884">
    <property type="entry name" value="guaA_Cterm"/>
    <property type="match status" value="1"/>
</dbReference>
<dbReference type="NCBIfam" id="TIGR00888">
    <property type="entry name" value="guaA_Nterm"/>
    <property type="match status" value="1"/>
</dbReference>
<dbReference type="NCBIfam" id="NF000848">
    <property type="entry name" value="PRK00074.1"/>
    <property type="match status" value="1"/>
</dbReference>
<dbReference type="PANTHER" id="PTHR11922:SF2">
    <property type="entry name" value="GMP SYNTHASE [GLUTAMINE-HYDROLYZING]"/>
    <property type="match status" value="1"/>
</dbReference>
<dbReference type="PANTHER" id="PTHR11922">
    <property type="entry name" value="GMP SYNTHASE-RELATED"/>
    <property type="match status" value="1"/>
</dbReference>
<dbReference type="Pfam" id="PF00117">
    <property type="entry name" value="GATase"/>
    <property type="match status" value="1"/>
</dbReference>
<dbReference type="Pfam" id="PF00958">
    <property type="entry name" value="GMP_synt_C"/>
    <property type="match status" value="1"/>
</dbReference>
<dbReference type="Pfam" id="PF02540">
    <property type="entry name" value="NAD_synthase"/>
    <property type="match status" value="1"/>
</dbReference>
<dbReference type="PRINTS" id="PR00097">
    <property type="entry name" value="ANTSNTHASEII"/>
</dbReference>
<dbReference type="PRINTS" id="PR00099">
    <property type="entry name" value="CPSGATASE"/>
</dbReference>
<dbReference type="PRINTS" id="PR00096">
    <property type="entry name" value="GATASE"/>
</dbReference>
<dbReference type="SUPFAM" id="SSF52402">
    <property type="entry name" value="Adenine nucleotide alpha hydrolases-like"/>
    <property type="match status" value="1"/>
</dbReference>
<dbReference type="SUPFAM" id="SSF52317">
    <property type="entry name" value="Class I glutamine amidotransferase-like"/>
    <property type="match status" value="1"/>
</dbReference>
<dbReference type="SUPFAM" id="SSF54810">
    <property type="entry name" value="GMP synthetase C-terminal dimerisation domain"/>
    <property type="match status" value="1"/>
</dbReference>
<dbReference type="PROSITE" id="PS51273">
    <property type="entry name" value="GATASE_TYPE_1"/>
    <property type="match status" value="1"/>
</dbReference>
<dbReference type="PROSITE" id="PS51553">
    <property type="entry name" value="GMPS_ATP_PPASE"/>
    <property type="match status" value="1"/>
</dbReference>
<organism>
    <name type="scientific">Proteus mirabilis (strain HI4320)</name>
    <dbReference type="NCBI Taxonomy" id="529507"/>
    <lineage>
        <taxon>Bacteria</taxon>
        <taxon>Pseudomonadati</taxon>
        <taxon>Pseudomonadota</taxon>
        <taxon>Gammaproteobacteria</taxon>
        <taxon>Enterobacterales</taxon>
        <taxon>Morganellaceae</taxon>
        <taxon>Proteus</taxon>
    </lineage>
</organism>
<protein>
    <recommendedName>
        <fullName evidence="1">GMP synthase [glutamine-hydrolyzing]</fullName>
        <ecNumber evidence="1">6.3.5.2</ecNumber>
    </recommendedName>
    <alternativeName>
        <fullName evidence="1">GMP synthetase</fullName>
    </alternativeName>
    <alternativeName>
        <fullName evidence="1">Glutamine amidotransferase</fullName>
    </alternativeName>
</protein>
<feature type="chain" id="PRO_1000120362" description="GMP synthase [glutamine-hydrolyzing]">
    <location>
        <begin position="1"/>
        <end position="525"/>
    </location>
</feature>
<feature type="domain" description="Glutamine amidotransferase type-1" evidence="1">
    <location>
        <begin position="9"/>
        <end position="207"/>
    </location>
</feature>
<feature type="domain" description="GMPS ATP-PPase" evidence="1">
    <location>
        <begin position="208"/>
        <end position="400"/>
    </location>
</feature>
<feature type="active site" description="Nucleophile" evidence="1">
    <location>
        <position position="86"/>
    </location>
</feature>
<feature type="active site" evidence="1">
    <location>
        <position position="181"/>
    </location>
</feature>
<feature type="active site" evidence="1">
    <location>
        <position position="183"/>
    </location>
</feature>
<feature type="binding site" evidence="1">
    <location>
        <begin position="235"/>
        <end position="241"/>
    </location>
    <ligand>
        <name>ATP</name>
        <dbReference type="ChEBI" id="CHEBI:30616"/>
    </ligand>
</feature>
<accession>B4EY59</accession>
<evidence type="ECO:0000255" key="1">
    <source>
        <dbReference type="HAMAP-Rule" id="MF_00344"/>
    </source>
</evidence>